<organism>
    <name type="scientific">Nitratidesulfovibrio vulgaris (strain ATCC 29579 / DSM 644 / CCUG 34227 / NCIMB 8303 / VKM B-1760 / Hildenborough)</name>
    <name type="common">Desulfovibrio vulgaris</name>
    <dbReference type="NCBI Taxonomy" id="882"/>
    <lineage>
        <taxon>Bacteria</taxon>
        <taxon>Pseudomonadati</taxon>
        <taxon>Thermodesulfobacteriota</taxon>
        <taxon>Desulfovibrionia</taxon>
        <taxon>Desulfovibrionales</taxon>
        <taxon>Desulfovibrionaceae</taxon>
        <taxon>Nitratidesulfovibrio</taxon>
    </lineage>
</organism>
<gene>
    <name evidence="1" type="primary">plsX</name>
    <name type="ordered locus">DVU_1208</name>
</gene>
<comment type="function">
    <text evidence="1">Catalyzes the reversible formation of acyl-phosphate (acyl-PO(4)) from acyl-[acyl-carrier-protein] (acyl-ACP). This enzyme utilizes acyl-ACP as fatty acyl donor, but not acyl-CoA.</text>
</comment>
<comment type="catalytic activity">
    <reaction evidence="1">
        <text>a fatty acyl-[ACP] + phosphate = an acyl phosphate + holo-[ACP]</text>
        <dbReference type="Rhea" id="RHEA:42292"/>
        <dbReference type="Rhea" id="RHEA-COMP:9685"/>
        <dbReference type="Rhea" id="RHEA-COMP:14125"/>
        <dbReference type="ChEBI" id="CHEBI:43474"/>
        <dbReference type="ChEBI" id="CHEBI:59918"/>
        <dbReference type="ChEBI" id="CHEBI:64479"/>
        <dbReference type="ChEBI" id="CHEBI:138651"/>
        <dbReference type="EC" id="2.3.1.274"/>
    </reaction>
</comment>
<comment type="pathway">
    <text evidence="1">Lipid metabolism; phospholipid metabolism.</text>
</comment>
<comment type="subunit">
    <text evidence="1">Homodimer. Probably interacts with PlsY.</text>
</comment>
<comment type="subcellular location">
    <subcellularLocation>
        <location evidence="1">Cytoplasm</location>
    </subcellularLocation>
    <text evidence="1">Associated with the membrane possibly through PlsY.</text>
</comment>
<comment type="similarity">
    <text evidence="1">Belongs to the PlsX family.</text>
</comment>
<keyword id="KW-0963">Cytoplasm</keyword>
<keyword id="KW-0444">Lipid biosynthesis</keyword>
<keyword id="KW-0443">Lipid metabolism</keyword>
<keyword id="KW-0594">Phospholipid biosynthesis</keyword>
<keyword id="KW-1208">Phospholipid metabolism</keyword>
<keyword id="KW-1185">Reference proteome</keyword>
<keyword id="KW-0808">Transferase</keyword>
<name>PLSX_NITV2</name>
<feature type="chain" id="PRO_0000189874" description="Phosphate acyltransferase">
    <location>
        <begin position="1"/>
        <end position="345"/>
    </location>
</feature>
<protein>
    <recommendedName>
        <fullName evidence="1">Phosphate acyltransferase</fullName>
        <ecNumber evidence="1">2.3.1.274</ecNumber>
    </recommendedName>
    <alternativeName>
        <fullName evidence="1">Acyl-ACP phosphotransacylase</fullName>
    </alternativeName>
    <alternativeName>
        <fullName evidence="1">Acyl-[acyl-carrier-protein]--phosphate acyltransferase</fullName>
    </alternativeName>
    <alternativeName>
        <fullName evidence="1">Phosphate-acyl-ACP acyltransferase</fullName>
    </alternativeName>
</protein>
<sequence length="345" mass="36895">MNSTIIAVDAMGGDFGPSVVVPGAVDAARERGLKVLLVGDRQKVEEELARIPLDGVEVEVVHASEVAGMDEKPSDILRRKKDASIQVVCRLVRDGHAHGIVSAGHSGASVACGMFIMGRVPGVERPALASVMPTEKQPIVLLDVGANVDCKPHHLFQFGLMANAFARDLLGYETPRIGLLSIGEEEGKGNTLVKEAYELFKLAQNINFVGNVEGRDLFTGEVDVVVCDGFVGNVALKLSEGLSSSMSRVLKRELLSGFLPKLGTLLARSAFKRFARVVDYAEYGGAPLLGLQSIAIVCHGKSNAKAIKSAVNMAATFVEKKTNERVVQAICANEELTRYGKAVRQ</sequence>
<reference key="1">
    <citation type="journal article" date="2004" name="Nat. Biotechnol.">
        <title>The genome sequence of the anaerobic, sulfate-reducing bacterium Desulfovibrio vulgaris Hildenborough.</title>
        <authorList>
            <person name="Heidelberg J.F."/>
            <person name="Seshadri R."/>
            <person name="Haveman S.A."/>
            <person name="Hemme C.L."/>
            <person name="Paulsen I.T."/>
            <person name="Kolonay J.F."/>
            <person name="Eisen J.A."/>
            <person name="Ward N.L."/>
            <person name="Methe B.A."/>
            <person name="Brinkac L.M."/>
            <person name="Daugherty S.C."/>
            <person name="DeBoy R.T."/>
            <person name="Dodson R.J."/>
            <person name="Durkin A.S."/>
            <person name="Madupu R."/>
            <person name="Nelson W.C."/>
            <person name="Sullivan S.A."/>
            <person name="Fouts D.E."/>
            <person name="Haft D.H."/>
            <person name="Selengut J."/>
            <person name="Peterson J.D."/>
            <person name="Davidsen T.M."/>
            <person name="Zafar N."/>
            <person name="Zhou L."/>
            <person name="Radune D."/>
            <person name="Dimitrov G."/>
            <person name="Hance M."/>
            <person name="Tran K."/>
            <person name="Khouri H.M."/>
            <person name="Gill J."/>
            <person name="Utterback T.R."/>
            <person name="Feldblyum T.V."/>
            <person name="Wall J.D."/>
            <person name="Voordouw G."/>
            <person name="Fraser C.M."/>
        </authorList>
    </citation>
    <scope>NUCLEOTIDE SEQUENCE [LARGE SCALE GENOMIC DNA]</scope>
    <source>
        <strain>ATCC 29579 / DSM 644 / CCUG 34227 / NCIMB 8303 / VKM B-1760 / Hildenborough</strain>
    </source>
</reference>
<evidence type="ECO:0000255" key="1">
    <source>
        <dbReference type="HAMAP-Rule" id="MF_00019"/>
    </source>
</evidence>
<dbReference type="EC" id="2.3.1.274" evidence="1"/>
<dbReference type="EMBL" id="AE017285">
    <property type="protein sequence ID" value="AAS95686.1"/>
    <property type="molecule type" value="Genomic_DNA"/>
</dbReference>
<dbReference type="RefSeq" id="WP_010938504.1">
    <property type="nucleotide sequence ID" value="NC_002937.3"/>
</dbReference>
<dbReference type="RefSeq" id="YP_010427.1">
    <property type="nucleotide sequence ID" value="NC_002937.3"/>
</dbReference>
<dbReference type="SMR" id="Q72CS5"/>
<dbReference type="STRING" id="882.DVU_1208"/>
<dbReference type="PaxDb" id="882-DVU_1208"/>
<dbReference type="EnsemblBacteria" id="AAS95686">
    <property type="protein sequence ID" value="AAS95686"/>
    <property type="gene ID" value="DVU_1208"/>
</dbReference>
<dbReference type="KEGG" id="dvu:DVU_1208"/>
<dbReference type="PATRIC" id="fig|882.5.peg.1132"/>
<dbReference type="eggNOG" id="COG0416">
    <property type="taxonomic scope" value="Bacteria"/>
</dbReference>
<dbReference type="HOGENOM" id="CLU_039379_1_1_7"/>
<dbReference type="OrthoDB" id="9806408at2"/>
<dbReference type="PhylomeDB" id="Q72CS5"/>
<dbReference type="UniPathway" id="UPA00085"/>
<dbReference type="Proteomes" id="UP000002194">
    <property type="component" value="Chromosome"/>
</dbReference>
<dbReference type="GO" id="GO:0005737">
    <property type="term" value="C:cytoplasm"/>
    <property type="evidence" value="ECO:0007669"/>
    <property type="project" value="UniProtKB-SubCell"/>
</dbReference>
<dbReference type="GO" id="GO:0043811">
    <property type="term" value="F:phosphate:acyl-[acyl carrier protein] acyltransferase activity"/>
    <property type="evidence" value="ECO:0007669"/>
    <property type="project" value="UniProtKB-UniRule"/>
</dbReference>
<dbReference type="GO" id="GO:0006633">
    <property type="term" value="P:fatty acid biosynthetic process"/>
    <property type="evidence" value="ECO:0007669"/>
    <property type="project" value="UniProtKB-UniRule"/>
</dbReference>
<dbReference type="GO" id="GO:0008654">
    <property type="term" value="P:phospholipid biosynthetic process"/>
    <property type="evidence" value="ECO:0007669"/>
    <property type="project" value="UniProtKB-KW"/>
</dbReference>
<dbReference type="Gene3D" id="3.40.718.10">
    <property type="entry name" value="Isopropylmalate Dehydrogenase"/>
    <property type="match status" value="1"/>
</dbReference>
<dbReference type="HAMAP" id="MF_00019">
    <property type="entry name" value="PlsX"/>
    <property type="match status" value="1"/>
</dbReference>
<dbReference type="InterPro" id="IPR003664">
    <property type="entry name" value="FA_synthesis"/>
</dbReference>
<dbReference type="InterPro" id="IPR012281">
    <property type="entry name" value="Phospholipid_synth_PlsX-like"/>
</dbReference>
<dbReference type="NCBIfam" id="TIGR00182">
    <property type="entry name" value="plsX"/>
    <property type="match status" value="1"/>
</dbReference>
<dbReference type="PANTHER" id="PTHR30100">
    <property type="entry name" value="FATTY ACID/PHOSPHOLIPID SYNTHESIS PROTEIN PLSX"/>
    <property type="match status" value="1"/>
</dbReference>
<dbReference type="PANTHER" id="PTHR30100:SF1">
    <property type="entry name" value="PHOSPHATE ACYLTRANSFERASE"/>
    <property type="match status" value="1"/>
</dbReference>
<dbReference type="Pfam" id="PF02504">
    <property type="entry name" value="FA_synthesis"/>
    <property type="match status" value="1"/>
</dbReference>
<dbReference type="PIRSF" id="PIRSF002465">
    <property type="entry name" value="Phsphlp_syn_PlsX"/>
    <property type="match status" value="1"/>
</dbReference>
<dbReference type="SUPFAM" id="SSF53659">
    <property type="entry name" value="Isocitrate/Isopropylmalate dehydrogenase-like"/>
    <property type="match status" value="1"/>
</dbReference>
<proteinExistence type="inferred from homology"/>
<accession>Q72CS5</accession>